<reference key="1">
    <citation type="journal article" date="2008" name="Chem. Biol. Interact.">
        <title>Extending the Bacillus cereus group genomics to putative food-borne pathogens of different toxicity.</title>
        <authorList>
            <person name="Lapidus A."/>
            <person name="Goltsman E."/>
            <person name="Auger S."/>
            <person name="Galleron N."/>
            <person name="Segurens B."/>
            <person name="Dossat C."/>
            <person name="Land M.L."/>
            <person name="Broussolle V."/>
            <person name="Brillard J."/>
            <person name="Guinebretiere M.-H."/>
            <person name="Sanchis V."/>
            <person name="Nguen-the C."/>
            <person name="Lereclus D."/>
            <person name="Richardson P."/>
            <person name="Wincker P."/>
            <person name="Weissenbach J."/>
            <person name="Ehrlich S.D."/>
            <person name="Sorokin A."/>
        </authorList>
    </citation>
    <scope>NUCLEOTIDE SEQUENCE [LARGE SCALE GENOMIC DNA]</scope>
    <source>
        <strain>KBAB4</strain>
    </source>
</reference>
<feature type="chain" id="PRO_1000089066" description="Argininosuccinate lyase">
    <location>
        <begin position="1"/>
        <end position="462"/>
    </location>
</feature>
<protein>
    <recommendedName>
        <fullName evidence="1">Argininosuccinate lyase</fullName>
        <shortName evidence="1">ASAL</shortName>
        <ecNumber evidence="1">4.3.2.1</ecNumber>
    </recommendedName>
    <alternativeName>
        <fullName evidence="1">Arginosuccinase</fullName>
    </alternativeName>
</protein>
<comment type="catalytic activity">
    <reaction evidence="1">
        <text>2-(N(omega)-L-arginino)succinate = fumarate + L-arginine</text>
        <dbReference type="Rhea" id="RHEA:24020"/>
        <dbReference type="ChEBI" id="CHEBI:29806"/>
        <dbReference type="ChEBI" id="CHEBI:32682"/>
        <dbReference type="ChEBI" id="CHEBI:57472"/>
        <dbReference type="EC" id="4.3.2.1"/>
    </reaction>
</comment>
<comment type="pathway">
    <text evidence="1">Amino-acid biosynthesis; L-arginine biosynthesis; L-arginine from L-ornithine and carbamoyl phosphate: step 3/3.</text>
</comment>
<comment type="subcellular location">
    <subcellularLocation>
        <location evidence="1">Cytoplasm</location>
    </subcellularLocation>
</comment>
<comment type="similarity">
    <text evidence="1">Belongs to the lyase 1 family. Argininosuccinate lyase subfamily.</text>
</comment>
<gene>
    <name evidence="1" type="primary">argH</name>
    <name type="ordered locus">BcerKBAB4_4459</name>
</gene>
<keyword id="KW-0028">Amino-acid biosynthesis</keyword>
<keyword id="KW-0055">Arginine biosynthesis</keyword>
<keyword id="KW-0963">Cytoplasm</keyword>
<keyword id="KW-0456">Lyase</keyword>
<organism>
    <name type="scientific">Bacillus mycoides (strain KBAB4)</name>
    <name type="common">Bacillus weihenstephanensis</name>
    <dbReference type="NCBI Taxonomy" id="315730"/>
    <lineage>
        <taxon>Bacteria</taxon>
        <taxon>Bacillati</taxon>
        <taxon>Bacillota</taxon>
        <taxon>Bacilli</taxon>
        <taxon>Bacillales</taxon>
        <taxon>Bacillaceae</taxon>
        <taxon>Bacillus</taxon>
        <taxon>Bacillus cereus group</taxon>
    </lineage>
</organism>
<dbReference type="EC" id="4.3.2.1" evidence="1"/>
<dbReference type="EMBL" id="CP000903">
    <property type="protein sequence ID" value="ABY45617.1"/>
    <property type="molecule type" value="Genomic_DNA"/>
</dbReference>
<dbReference type="RefSeq" id="WP_012261816.1">
    <property type="nucleotide sequence ID" value="NC_010184.1"/>
</dbReference>
<dbReference type="SMR" id="A9VKE0"/>
<dbReference type="KEGG" id="bwe:BcerKBAB4_4459"/>
<dbReference type="eggNOG" id="COG0165">
    <property type="taxonomic scope" value="Bacteria"/>
</dbReference>
<dbReference type="HOGENOM" id="CLU_027272_2_3_9"/>
<dbReference type="UniPathway" id="UPA00068">
    <property type="reaction ID" value="UER00114"/>
</dbReference>
<dbReference type="Proteomes" id="UP000002154">
    <property type="component" value="Chromosome"/>
</dbReference>
<dbReference type="GO" id="GO:0005829">
    <property type="term" value="C:cytosol"/>
    <property type="evidence" value="ECO:0007669"/>
    <property type="project" value="TreeGrafter"/>
</dbReference>
<dbReference type="GO" id="GO:0004056">
    <property type="term" value="F:argininosuccinate lyase activity"/>
    <property type="evidence" value="ECO:0007669"/>
    <property type="project" value="UniProtKB-UniRule"/>
</dbReference>
<dbReference type="GO" id="GO:0042450">
    <property type="term" value="P:arginine biosynthetic process via ornithine"/>
    <property type="evidence" value="ECO:0007669"/>
    <property type="project" value="InterPro"/>
</dbReference>
<dbReference type="GO" id="GO:0006526">
    <property type="term" value="P:L-arginine biosynthetic process"/>
    <property type="evidence" value="ECO:0007669"/>
    <property type="project" value="UniProtKB-UniRule"/>
</dbReference>
<dbReference type="CDD" id="cd01359">
    <property type="entry name" value="Argininosuccinate_lyase"/>
    <property type="match status" value="1"/>
</dbReference>
<dbReference type="FunFam" id="1.10.275.10:FF:000002">
    <property type="entry name" value="Argininosuccinate lyase"/>
    <property type="match status" value="1"/>
</dbReference>
<dbReference type="FunFam" id="1.10.40.30:FF:000001">
    <property type="entry name" value="Argininosuccinate lyase"/>
    <property type="match status" value="1"/>
</dbReference>
<dbReference type="FunFam" id="1.20.200.10:FF:000006">
    <property type="entry name" value="Argininosuccinate lyase"/>
    <property type="match status" value="1"/>
</dbReference>
<dbReference type="Gene3D" id="1.10.40.30">
    <property type="entry name" value="Fumarase/aspartase (C-terminal domain)"/>
    <property type="match status" value="1"/>
</dbReference>
<dbReference type="Gene3D" id="1.20.200.10">
    <property type="entry name" value="Fumarase/aspartase (Central domain)"/>
    <property type="match status" value="1"/>
</dbReference>
<dbReference type="Gene3D" id="1.10.275.10">
    <property type="entry name" value="Fumarase/aspartase (N-terminal domain)"/>
    <property type="match status" value="1"/>
</dbReference>
<dbReference type="HAMAP" id="MF_00006">
    <property type="entry name" value="Arg_succ_lyase"/>
    <property type="match status" value="1"/>
</dbReference>
<dbReference type="InterPro" id="IPR029419">
    <property type="entry name" value="Arg_succ_lyase_C"/>
</dbReference>
<dbReference type="InterPro" id="IPR009049">
    <property type="entry name" value="Argininosuccinate_lyase"/>
</dbReference>
<dbReference type="InterPro" id="IPR024083">
    <property type="entry name" value="Fumarase/histidase_N"/>
</dbReference>
<dbReference type="InterPro" id="IPR020557">
    <property type="entry name" value="Fumarate_lyase_CS"/>
</dbReference>
<dbReference type="InterPro" id="IPR000362">
    <property type="entry name" value="Fumarate_lyase_fam"/>
</dbReference>
<dbReference type="InterPro" id="IPR022761">
    <property type="entry name" value="Fumarate_lyase_N"/>
</dbReference>
<dbReference type="InterPro" id="IPR008948">
    <property type="entry name" value="L-Aspartase-like"/>
</dbReference>
<dbReference type="NCBIfam" id="TIGR00838">
    <property type="entry name" value="argH"/>
    <property type="match status" value="1"/>
</dbReference>
<dbReference type="PANTHER" id="PTHR43814">
    <property type="entry name" value="ARGININOSUCCINATE LYASE"/>
    <property type="match status" value="1"/>
</dbReference>
<dbReference type="PANTHER" id="PTHR43814:SF1">
    <property type="entry name" value="ARGININOSUCCINATE LYASE"/>
    <property type="match status" value="1"/>
</dbReference>
<dbReference type="Pfam" id="PF14698">
    <property type="entry name" value="ASL_C2"/>
    <property type="match status" value="1"/>
</dbReference>
<dbReference type="Pfam" id="PF00206">
    <property type="entry name" value="Lyase_1"/>
    <property type="match status" value="1"/>
</dbReference>
<dbReference type="PRINTS" id="PR00145">
    <property type="entry name" value="ARGSUCLYASE"/>
</dbReference>
<dbReference type="PRINTS" id="PR00149">
    <property type="entry name" value="FUMRATELYASE"/>
</dbReference>
<dbReference type="SUPFAM" id="SSF48557">
    <property type="entry name" value="L-aspartase-like"/>
    <property type="match status" value="1"/>
</dbReference>
<dbReference type="PROSITE" id="PS00163">
    <property type="entry name" value="FUMARATE_LYASES"/>
    <property type="match status" value="1"/>
</dbReference>
<accession>A9VKE0</accession>
<sequence length="462" mass="52107">MSKLWGGRFTEEAEAWVEEFGASISFDKQLVSQDIKGSIAHVTMLAKQGIVTKEEAEKIKIGLQYLLEEAKQNKLNFSVEAEDIHLNIEKMLIERIGEVGGKLHTGRSRNDQVATDMHLYLKEKVEDIIKATKQLQTVLVHQAENNIETIMPGYTHLQRAQPISFAHHILAYFWMLERDVNRYEDSLKRINISPLGAGALAGTTFPIDREYSAELLGFNGIYENSLDAVSDRDFILEFLSNSSMLMMHLSRFCEELILWSSQEFQFIEMSDQYATGSSIMPQKKNPDMAELIRGKTGRVYGNLFSLLTVMKGLPLAYNKDLQEDKEGMFDTVKTVEGCLHIMAGMIETMTVNKEKMGQAVTQDFSNATEIADYLASKGLPFRQAHEIVGKLVLHCTQKGIYLLDVPLETYKEMSPLFEEDLYEVLSPYAAVKRRNSAGGTGFEQIEKALEKAKGLAIEFVGI</sequence>
<name>ARLY_BACMK</name>
<evidence type="ECO:0000255" key="1">
    <source>
        <dbReference type="HAMAP-Rule" id="MF_00006"/>
    </source>
</evidence>
<proteinExistence type="inferred from homology"/>